<feature type="chain" id="PRO_0000136503" description="Phosphoribosyl-AMP cyclohydrolase">
    <location>
        <begin position="1"/>
        <end position="124"/>
    </location>
</feature>
<feature type="binding site" evidence="1">
    <location>
        <position position="82"/>
    </location>
    <ligand>
        <name>Mg(2+)</name>
        <dbReference type="ChEBI" id="CHEBI:18420"/>
    </ligand>
</feature>
<feature type="binding site" evidence="1">
    <location>
        <position position="83"/>
    </location>
    <ligand>
        <name>Zn(2+)</name>
        <dbReference type="ChEBI" id="CHEBI:29105"/>
        <note>ligand shared between dimeric partners</note>
    </ligand>
</feature>
<feature type="binding site" evidence="1">
    <location>
        <position position="84"/>
    </location>
    <ligand>
        <name>Mg(2+)</name>
        <dbReference type="ChEBI" id="CHEBI:18420"/>
    </ligand>
</feature>
<feature type="binding site" evidence="1">
    <location>
        <position position="86"/>
    </location>
    <ligand>
        <name>Mg(2+)</name>
        <dbReference type="ChEBI" id="CHEBI:18420"/>
    </ligand>
</feature>
<feature type="binding site" evidence="1">
    <location>
        <position position="99"/>
    </location>
    <ligand>
        <name>Zn(2+)</name>
        <dbReference type="ChEBI" id="CHEBI:29105"/>
        <note>ligand shared between dimeric partners</note>
    </ligand>
</feature>
<feature type="binding site" evidence="1">
    <location>
        <position position="106"/>
    </location>
    <ligand>
        <name>Zn(2+)</name>
        <dbReference type="ChEBI" id="CHEBI:29105"/>
        <note>ligand shared between dimeric partners</note>
    </ligand>
</feature>
<feature type="sequence conflict" description="In Ref. 1; AAD21538." evidence="2" ref="1">
    <original>K</original>
    <variation>Q</variation>
    <location>
        <position position="123"/>
    </location>
</feature>
<accession>Q9X3W1</accession>
<accession>Q5NNA8</accession>
<sequence length="124" mass="14150">MQNDQDYGNKLNPAWDEKGLITAVLTDAKTGLLLMVAHMNKESFELSMATKEATFWSRSRKKIWRKGEESGHVMKIQEIRIDCDQDTLWLKVIPMGPACHTGAQSCFYRLVEDGHLVTIPKDKI</sequence>
<dbReference type="EC" id="3.5.4.19" evidence="1"/>
<dbReference type="EMBL" id="AF088896">
    <property type="protein sequence ID" value="AAD21538.1"/>
    <property type="molecule type" value="Genomic_DNA"/>
</dbReference>
<dbReference type="EMBL" id="AE008692">
    <property type="protein sequence ID" value="AAV89802.1"/>
    <property type="molecule type" value="Genomic_DNA"/>
</dbReference>
<dbReference type="RefSeq" id="WP_011241001.1">
    <property type="nucleotide sequence ID" value="NZ_CP035711.1"/>
</dbReference>
<dbReference type="SMR" id="Q9X3W1"/>
<dbReference type="STRING" id="264203.ZMO1178"/>
<dbReference type="KEGG" id="zmo:ZMO1178"/>
<dbReference type="eggNOG" id="COG0139">
    <property type="taxonomic scope" value="Bacteria"/>
</dbReference>
<dbReference type="HOGENOM" id="CLU_048577_5_0_5"/>
<dbReference type="UniPathway" id="UPA00031">
    <property type="reaction ID" value="UER00008"/>
</dbReference>
<dbReference type="Proteomes" id="UP000001173">
    <property type="component" value="Chromosome"/>
</dbReference>
<dbReference type="GO" id="GO:0005737">
    <property type="term" value="C:cytoplasm"/>
    <property type="evidence" value="ECO:0007669"/>
    <property type="project" value="UniProtKB-SubCell"/>
</dbReference>
<dbReference type="GO" id="GO:0000287">
    <property type="term" value="F:magnesium ion binding"/>
    <property type="evidence" value="ECO:0007669"/>
    <property type="project" value="UniProtKB-UniRule"/>
</dbReference>
<dbReference type="GO" id="GO:0004635">
    <property type="term" value="F:phosphoribosyl-AMP cyclohydrolase activity"/>
    <property type="evidence" value="ECO:0007669"/>
    <property type="project" value="UniProtKB-UniRule"/>
</dbReference>
<dbReference type="GO" id="GO:0008270">
    <property type="term" value="F:zinc ion binding"/>
    <property type="evidence" value="ECO:0007669"/>
    <property type="project" value="UniProtKB-UniRule"/>
</dbReference>
<dbReference type="GO" id="GO:0000105">
    <property type="term" value="P:L-histidine biosynthetic process"/>
    <property type="evidence" value="ECO:0007669"/>
    <property type="project" value="UniProtKB-UniRule"/>
</dbReference>
<dbReference type="FunFam" id="3.10.20.810:FF:000001">
    <property type="entry name" value="Histidine biosynthesis bifunctional protein HisIE"/>
    <property type="match status" value="1"/>
</dbReference>
<dbReference type="Gene3D" id="3.10.20.810">
    <property type="entry name" value="Phosphoribosyl-AMP cyclohydrolase"/>
    <property type="match status" value="1"/>
</dbReference>
<dbReference type="HAMAP" id="MF_01021">
    <property type="entry name" value="HisI"/>
    <property type="match status" value="1"/>
</dbReference>
<dbReference type="InterPro" id="IPR026660">
    <property type="entry name" value="PRA-CH"/>
</dbReference>
<dbReference type="InterPro" id="IPR002496">
    <property type="entry name" value="PRib_AMP_CycHydrolase_dom"/>
</dbReference>
<dbReference type="InterPro" id="IPR038019">
    <property type="entry name" value="PRib_AMP_CycHydrolase_sf"/>
</dbReference>
<dbReference type="NCBIfam" id="NF000768">
    <property type="entry name" value="PRK00051.1"/>
    <property type="match status" value="1"/>
</dbReference>
<dbReference type="PANTHER" id="PTHR42945">
    <property type="entry name" value="HISTIDINE BIOSYNTHESIS BIFUNCTIONAL PROTEIN"/>
    <property type="match status" value="1"/>
</dbReference>
<dbReference type="PANTHER" id="PTHR42945:SF1">
    <property type="entry name" value="HISTIDINE BIOSYNTHESIS BIFUNCTIONAL PROTEIN HIS7"/>
    <property type="match status" value="1"/>
</dbReference>
<dbReference type="Pfam" id="PF01502">
    <property type="entry name" value="PRA-CH"/>
    <property type="match status" value="1"/>
</dbReference>
<dbReference type="SUPFAM" id="SSF141734">
    <property type="entry name" value="HisI-like"/>
    <property type="match status" value="1"/>
</dbReference>
<reference key="1">
    <citation type="submission" date="1998-08" db="EMBL/GenBank/DDBJ databases">
        <authorList>
            <person name="Lee H.J."/>
            <person name="Kang H.S."/>
        </authorList>
    </citation>
    <scope>NUCLEOTIDE SEQUENCE [GENOMIC DNA]</scope>
    <source>
        <strain>ATCC 31821 / ZM4 / CP4</strain>
    </source>
</reference>
<reference key="2">
    <citation type="journal article" date="2005" name="Nat. Biotechnol.">
        <title>The genome sequence of the ethanologenic bacterium Zymomonas mobilis ZM4.</title>
        <authorList>
            <person name="Seo J.-S."/>
            <person name="Chong H."/>
            <person name="Park H.S."/>
            <person name="Yoon K.-O."/>
            <person name="Jung C."/>
            <person name="Kim J.J."/>
            <person name="Hong J.H."/>
            <person name="Kim H."/>
            <person name="Kim J.-H."/>
            <person name="Kil J.-I."/>
            <person name="Park C.J."/>
            <person name="Oh H.-M."/>
            <person name="Lee J.-S."/>
            <person name="Jin S.-J."/>
            <person name="Um H.-W."/>
            <person name="Lee H.-J."/>
            <person name="Oh S.-J."/>
            <person name="Kim J.Y."/>
            <person name="Kang H.L."/>
            <person name="Lee S.Y."/>
            <person name="Lee K.J."/>
            <person name="Kang H.S."/>
        </authorList>
    </citation>
    <scope>NUCLEOTIDE SEQUENCE [LARGE SCALE GENOMIC DNA]</scope>
    <source>
        <strain>ATCC 31821 / ZM4 / CP4</strain>
    </source>
</reference>
<proteinExistence type="inferred from homology"/>
<protein>
    <recommendedName>
        <fullName evidence="1">Phosphoribosyl-AMP cyclohydrolase</fullName>
        <shortName evidence="1">PRA-CH</shortName>
        <ecNumber evidence="1">3.5.4.19</ecNumber>
    </recommendedName>
</protein>
<evidence type="ECO:0000255" key="1">
    <source>
        <dbReference type="HAMAP-Rule" id="MF_01021"/>
    </source>
</evidence>
<evidence type="ECO:0000305" key="2"/>
<name>HIS3_ZYMMO</name>
<organism>
    <name type="scientific">Zymomonas mobilis subsp. mobilis (strain ATCC 31821 / ZM4 / CP4)</name>
    <dbReference type="NCBI Taxonomy" id="264203"/>
    <lineage>
        <taxon>Bacteria</taxon>
        <taxon>Pseudomonadati</taxon>
        <taxon>Pseudomonadota</taxon>
        <taxon>Alphaproteobacteria</taxon>
        <taxon>Sphingomonadales</taxon>
        <taxon>Zymomonadaceae</taxon>
        <taxon>Zymomonas</taxon>
    </lineage>
</organism>
<gene>
    <name evidence="1" type="primary">hisI</name>
    <name type="ordered locus">ZMO1178</name>
</gene>
<comment type="function">
    <text evidence="1">Catalyzes the hydrolysis of the adenine ring of phosphoribosyl-AMP.</text>
</comment>
<comment type="catalytic activity">
    <reaction evidence="1">
        <text>1-(5-phospho-beta-D-ribosyl)-5'-AMP + H2O = 1-(5-phospho-beta-D-ribosyl)-5-[(5-phospho-beta-D-ribosylamino)methylideneamino]imidazole-4-carboxamide</text>
        <dbReference type="Rhea" id="RHEA:20049"/>
        <dbReference type="ChEBI" id="CHEBI:15377"/>
        <dbReference type="ChEBI" id="CHEBI:58435"/>
        <dbReference type="ChEBI" id="CHEBI:59457"/>
        <dbReference type="EC" id="3.5.4.19"/>
    </reaction>
</comment>
<comment type="cofactor">
    <cofactor evidence="1">
        <name>Mg(2+)</name>
        <dbReference type="ChEBI" id="CHEBI:18420"/>
    </cofactor>
    <text evidence="1">Binds 1 Mg(2+) ion per subunit.</text>
</comment>
<comment type="cofactor">
    <cofactor evidence="1">
        <name>Zn(2+)</name>
        <dbReference type="ChEBI" id="CHEBI:29105"/>
    </cofactor>
    <text evidence="1">Binds 1 zinc ion per subunit.</text>
</comment>
<comment type="pathway">
    <text evidence="1">Amino-acid biosynthesis; L-histidine biosynthesis; L-histidine from 5-phospho-alpha-D-ribose 1-diphosphate: step 3/9.</text>
</comment>
<comment type="subunit">
    <text evidence="1">Homodimer.</text>
</comment>
<comment type="subcellular location">
    <subcellularLocation>
        <location evidence="1">Cytoplasm</location>
    </subcellularLocation>
</comment>
<comment type="similarity">
    <text evidence="1">Belongs to the PRA-CH family.</text>
</comment>
<keyword id="KW-0028">Amino-acid biosynthesis</keyword>
<keyword id="KW-0963">Cytoplasm</keyword>
<keyword id="KW-0368">Histidine biosynthesis</keyword>
<keyword id="KW-0378">Hydrolase</keyword>
<keyword id="KW-0460">Magnesium</keyword>
<keyword id="KW-0479">Metal-binding</keyword>
<keyword id="KW-1185">Reference proteome</keyword>
<keyword id="KW-0862">Zinc</keyword>